<sequence length="322" mass="36586">MRVVLGPMEGVLDHLMRQILTEINDYDLCVTEFVRVIDQVLPDHVFHRLCPELMQGSQTTSGVPVHVQLLGQEPHWMAENAIRAAELGARGIDLNFGCPAKMVNKSKGGAALLQHPELIHSVVKACRDAVPANIPVSAKIRLGWENPEDCFEIVDAIQSAGANELTVHARTKQGGYKASEIKWEYINKIRERFSIPLIANGEIWNFEDGQRCIETTGVDSLMVCRGAFNIPNLGNMVKHNHTPMVWSDVVDLLIYYSKFEMKGDKGLYYPNRVKQWFAYLRQSYPEANELFREIRTFNKAAPIVEHIQRYRDELQSRQSQVA</sequence>
<keyword id="KW-0285">Flavoprotein</keyword>
<keyword id="KW-0288">FMN</keyword>
<keyword id="KW-0521">NADP</keyword>
<keyword id="KW-0560">Oxidoreductase</keyword>
<keyword id="KW-0694">RNA-binding</keyword>
<keyword id="KW-0819">tRNA processing</keyword>
<keyword id="KW-0820">tRNA-binding</keyword>
<accession>Q87N01</accession>
<feature type="chain" id="PRO_0000162127" description="tRNA-dihydrouridine(16) synthase">
    <location>
        <begin position="1"/>
        <end position="322"/>
    </location>
</feature>
<feature type="active site" description="Proton donor" evidence="1">
    <location>
        <position position="98"/>
    </location>
</feature>
<feature type="binding site" evidence="1">
    <location>
        <begin position="7"/>
        <end position="9"/>
    </location>
    <ligand>
        <name>FMN</name>
        <dbReference type="ChEBI" id="CHEBI:58210"/>
    </ligand>
</feature>
<feature type="binding site" evidence="1">
    <location>
        <position position="68"/>
    </location>
    <ligand>
        <name>FMN</name>
        <dbReference type="ChEBI" id="CHEBI:58210"/>
    </ligand>
</feature>
<feature type="binding site" evidence="1">
    <location>
        <position position="139"/>
    </location>
    <ligand>
        <name>FMN</name>
        <dbReference type="ChEBI" id="CHEBI:58210"/>
    </ligand>
</feature>
<feature type="binding site" evidence="1">
    <location>
        <begin position="200"/>
        <end position="202"/>
    </location>
    <ligand>
        <name>FMN</name>
        <dbReference type="ChEBI" id="CHEBI:58210"/>
    </ligand>
</feature>
<feature type="binding site" evidence="1">
    <location>
        <begin position="224"/>
        <end position="225"/>
    </location>
    <ligand>
        <name>FMN</name>
        <dbReference type="ChEBI" id="CHEBI:58210"/>
    </ligand>
</feature>
<feature type="site" description="Interacts with tRNA; defines subfamily-specific binding signature" evidence="1">
    <location>
        <position position="35"/>
    </location>
</feature>
<feature type="site" description="Interacts with tRNA" evidence="1">
    <location>
        <position position="95"/>
    </location>
</feature>
<feature type="site" description="Interacts with tRNA" evidence="1">
    <location>
        <position position="176"/>
    </location>
</feature>
<feature type="site" description="Interacts with tRNA; defines subfamily-specific binding signature" evidence="1">
    <location>
        <position position="272"/>
    </location>
</feature>
<feature type="site" description="Interacts with tRNA; defines subfamily-specific binding signature" evidence="1">
    <location>
        <position position="274"/>
    </location>
</feature>
<feature type="site" description="Interacts with tRNA" evidence="1">
    <location>
        <position position="279"/>
    </location>
</feature>
<feature type="site" description="Interacts with tRNA; defines subfamily-specific binding signature" evidence="1">
    <location>
        <position position="295"/>
    </location>
</feature>
<organism>
    <name type="scientific">Vibrio parahaemolyticus serotype O3:K6 (strain RIMD 2210633)</name>
    <dbReference type="NCBI Taxonomy" id="223926"/>
    <lineage>
        <taxon>Bacteria</taxon>
        <taxon>Pseudomonadati</taxon>
        <taxon>Pseudomonadota</taxon>
        <taxon>Gammaproteobacteria</taxon>
        <taxon>Vibrionales</taxon>
        <taxon>Vibrionaceae</taxon>
        <taxon>Vibrio</taxon>
    </lineage>
</organism>
<proteinExistence type="inferred from homology"/>
<dbReference type="EC" id="1.3.1.-" evidence="1"/>
<dbReference type="EMBL" id="BA000031">
    <property type="protein sequence ID" value="BAC60338.1"/>
    <property type="molecule type" value="Genomic_DNA"/>
</dbReference>
<dbReference type="RefSeq" id="NP_798454.1">
    <property type="nucleotide sequence ID" value="NC_004603.1"/>
</dbReference>
<dbReference type="RefSeq" id="WP_005461533.1">
    <property type="nucleotide sequence ID" value="NC_004603.1"/>
</dbReference>
<dbReference type="SMR" id="Q87N01"/>
<dbReference type="GeneID" id="1189586"/>
<dbReference type="KEGG" id="vpa:VP2075"/>
<dbReference type="PATRIC" id="fig|223926.6.peg.1986"/>
<dbReference type="eggNOG" id="COG0042">
    <property type="taxonomic scope" value="Bacteria"/>
</dbReference>
<dbReference type="HOGENOM" id="CLU_013299_0_4_6"/>
<dbReference type="Proteomes" id="UP000002493">
    <property type="component" value="Chromosome 1"/>
</dbReference>
<dbReference type="GO" id="GO:0050660">
    <property type="term" value="F:flavin adenine dinucleotide binding"/>
    <property type="evidence" value="ECO:0007669"/>
    <property type="project" value="InterPro"/>
</dbReference>
<dbReference type="GO" id="GO:0010181">
    <property type="term" value="F:FMN binding"/>
    <property type="evidence" value="ECO:0007669"/>
    <property type="project" value="UniProtKB-UniRule"/>
</dbReference>
<dbReference type="GO" id="GO:0000049">
    <property type="term" value="F:tRNA binding"/>
    <property type="evidence" value="ECO:0007669"/>
    <property type="project" value="UniProtKB-UniRule"/>
</dbReference>
<dbReference type="GO" id="GO:0102262">
    <property type="term" value="F:tRNA-dihydrouridine16 synthase activity"/>
    <property type="evidence" value="ECO:0007669"/>
    <property type="project" value="RHEA"/>
</dbReference>
<dbReference type="CDD" id="cd02801">
    <property type="entry name" value="DUS_like_FMN"/>
    <property type="match status" value="1"/>
</dbReference>
<dbReference type="Gene3D" id="3.20.20.70">
    <property type="entry name" value="Aldolase class I"/>
    <property type="match status" value="1"/>
</dbReference>
<dbReference type="Gene3D" id="1.20.225.30">
    <property type="entry name" value="Dihydrouridine synthase, C-terminal recognition domain"/>
    <property type="match status" value="1"/>
</dbReference>
<dbReference type="HAMAP" id="MF_02043">
    <property type="entry name" value="DusC_subfam"/>
    <property type="match status" value="1"/>
</dbReference>
<dbReference type="InterPro" id="IPR013785">
    <property type="entry name" value="Aldolase_TIM"/>
</dbReference>
<dbReference type="InterPro" id="IPR035587">
    <property type="entry name" value="DUS-like_FMN-bd"/>
</dbReference>
<dbReference type="InterPro" id="IPR001269">
    <property type="entry name" value="DUS_fam"/>
</dbReference>
<dbReference type="InterPro" id="IPR032886">
    <property type="entry name" value="DusC"/>
</dbReference>
<dbReference type="InterPro" id="IPR042270">
    <property type="entry name" value="DusC_C"/>
</dbReference>
<dbReference type="InterPro" id="IPR018517">
    <property type="entry name" value="tRNA_hU_synthase_CS"/>
</dbReference>
<dbReference type="NCBIfam" id="NF007838">
    <property type="entry name" value="PRK10550.1"/>
    <property type="match status" value="1"/>
</dbReference>
<dbReference type="PANTHER" id="PTHR11082">
    <property type="entry name" value="TRNA-DIHYDROURIDINE SYNTHASE"/>
    <property type="match status" value="1"/>
</dbReference>
<dbReference type="PANTHER" id="PTHR11082:SF26">
    <property type="entry name" value="TRNA-DIHYDROURIDINE(16) SYNTHASE"/>
    <property type="match status" value="1"/>
</dbReference>
<dbReference type="Pfam" id="PF01207">
    <property type="entry name" value="Dus"/>
    <property type="match status" value="1"/>
</dbReference>
<dbReference type="PIRSF" id="PIRSF006621">
    <property type="entry name" value="Dus"/>
    <property type="match status" value="1"/>
</dbReference>
<dbReference type="SUPFAM" id="SSF51395">
    <property type="entry name" value="FMN-linked oxidoreductases"/>
    <property type="match status" value="1"/>
</dbReference>
<dbReference type="PROSITE" id="PS01136">
    <property type="entry name" value="UPF0034"/>
    <property type="match status" value="1"/>
</dbReference>
<evidence type="ECO:0000255" key="1">
    <source>
        <dbReference type="HAMAP-Rule" id="MF_02043"/>
    </source>
</evidence>
<protein>
    <recommendedName>
        <fullName evidence="1">tRNA-dihydrouridine(16) synthase</fullName>
        <ecNumber evidence="1">1.3.1.-</ecNumber>
    </recommendedName>
    <alternativeName>
        <fullName evidence="1">U16-specific dihydrouridine synthase</fullName>
        <shortName evidence="1">U16-specific Dus</shortName>
    </alternativeName>
    <alternativeName>
        <fullName evidence="1">tRNA-dihydrouridine synthase C</fullName>
    </alternativeName>
</protein>
<reference key="1">
    <citation type="journal article" date="2003" name="Lancet">
        <title>Genome sequence of Vibrio parahaemolyticus: a pathogenic mechanism distinct from that of V. cholerae.</title>
        <authorList>
            <person name="Makino K."/>
            <person name="Oshima K."/>
            <person name="Kurokawa K."/>
            <person name="Yokoyama K."/>
            <person name="Uda T."/>
            <person name="Tagomori K."/>
            <person name="Iijima Y."/>
            <person name="Najima M."/>
            <person name="Nakano M."/>
            <person name="Yamashita A."/>
            <person name="Kubota Y."/>
            <person name="Kimura S."/>
            <person name="Yasunaga T."/>
            <person name="Honda T."/>
            <person name="Shinagawa H."/>
            <person name="Hattori M."/>
            <person name="Iida T."/>
        </authorList>
    </citation>
    <scope>NUCLEOTIDE SEQUENCE [LARGE SCALE GENOMIC DNA]</scope>
    <source>
        <strain>RIMD 2210633</strain>
    </source>
</reference>
<comment type="function">
    <text evidence="1">Catalyzes the synthesis of 5,6-dihydrouridine (D), a modified base found in the D-loop of most tRNAs, via the reduction of the C5-C6 double bond in target uridines. Specifically modifies U16 in tRNAs.</text>
</comment>
<comment type="catalytic activity">
    <reaction evidence="1">
        <text>5,6-dihydrouridine(16) in tRNA + NADP(+) = uridine(16) in tRNA + NADPH + H(+)</text>
        <dbReference type="Rhea" id="RHEA:53376"/>
        <dbReference type="Rhea" id="RHEA-COMP:13543"/>
        <dbReference type="Rhea" id="RHEA-COMP:13544"/>
        <dbReference type="ChEBI" id="CHEBI:15378"/>
        <dbReference type="ChEBI" id="CHEBI:57783"/>
        <dbReference type="ChEBI" id="CHEBI:58349"/>
        <dbReference type="ChEBI" id="CHEBI:65315"/>
        <dbReference type="ChEBI" id="CHEBI:74443"/>
    </reaction>
</comment>
<comment type="catalytic activity">
    <reaction evidence="1">
        <text>5,6-dihydrouridine(16) in tRNA + NAD(+) = uridine(16) in tRNA + NADH + H(+)</text>
        <dbReference type="Rhea" id="RHEA:53380"/>
        <dbReference type="Rhea" id="RHEA-COMP:13543"/>
        <dbReference type="Rhea" id="RHEA-COMP:13544"/>
        <dbReference type="ChEBI" id="CHEBI:15378"/>
        <dbReference type="ChEBI" id="CHEBI:57540"/>
        <dbReference type="ChEBI" id="CHEBI:57945"/>
        <dbReference type="ChEBI" id="CHEBI:65315"/>
        <dbReference type="ChEBI" id="CHEBI:74443"/>
    </reaction>
</comment>
<comment type="cofactor">
    <cofactor evidence="1">
        <name>FMN</name>
        <dbReference type="ChEBI" id="CHEBI:58210"/>
    </cofactor>
</comment>
<comment type="similarity">
    <text evidence="1">Belongs to the Dus family. DusC subfamily.</text>
</comment>
<gene>
    <name evidence="1" type="primary">dusC</name>
    <name type="ordered locus">VP2075</name>
</gene>
<name>DUSC_VIBPA</name>